<organism>
    <name type="scientific">Methylorubrum populi (strain ATCC BAA-705 / NCIMB 13946 / BJ001)</name>
    <name type="common">Methylobacterium populi</name>
    <dbReference type="NCBI Taxonomy" id="441620"/>
    <lineage>
        <taxon>Bacteria</taxon>
        <taxon>Pseudomonadati</taxon>
        <taxon>Pseudomonadota</taxon>
        <taxon>Alphaproteobacteria</taxon>
        <taxon>Hyphomicrobiales</taxon>
        <taxon>Methylobacteriaceae</taxon>
        <taxon>Methylorubrum</taxon>
    </lineage>
</organism>
<proteinExistence type="inferred from homology"/>
<name>MNMA_METPB</name>
<protein>
    <recommendedName>
        <fullName evidence="1">tRNA-specific 2-thiouridylase MnmA</fullName>
        <ecNumber evidence="1">2.8.1.13</ecNumber>
    </recommendedName>
</protein>
<sequence length="385" mass="41616">MNSLDLPKPPHETRVVVAMSGGVDSSVVAGLLKREGYDVVGVTLQLYDHGAATHRKGACCAGRDIHDARAVAETLGIPHYVLDYEDRFRESVIDRFAESYLSGETPIPCVECNRSVKFRDLLGMARDLGAEALATGHYVASRAQPEGGRALYRALDPARDQSYFLYATTPEQLAFLRFPLGERPKDETRALARELGLAVADKADSQDICFVPQGGYADVIAKLRPEAARPGEIVDLDGRRLGEHEGIIHYTVGQRRGLKLSVGEPLYVVRLEPETARVVVGPRAALATRRIRLTDLNWLGSRAPDGLADLPVAVRVRSTREPRPARLSWNAAEACLEVELVVPEDGVSPGQACVIYADDGPRAQVLGGGTIRRIGALQAGAAEAA</sequence>
<keyword id="KW-0067">ATP-binding</keyword>
<keyword id="KW-0963">Cytoplasm</keyword>
<keyword id="KW-1015">Disulfide bond</keyword>
<keyword id="KW-0547">Nucleotide-binding</keyword>
<keyword id="KW-0694">RNA-binding</keyword>
<keyword id="KW-0808">Transferase</keyword>
<keyword id="KW-0819">tRNA processing</keyword>
<keyword id="KW-0820">tRNA-binding</keyword>
<reference key="1">
    <citation type="submission" date="2008-04" db="EMBL/GenBank/DDBJ databases">
        <title>Complete sequence of chromosome of Methylobacterium populi BJ001.</title>
        <authorList>
            <consortium name="US DOE Joint Genome Institute"/>
            <person name="Copeland A."/>
            <person name="Lucas S."/>
            <person name="Lapidus A."/>
            <person name="Glavina del Rio T."/>
            <person name="Dalin E."/>
            <person name="Tice H."/>
            <person name="Bruce D."/>
            <person name="Goodwin L."/>
            <person name="Pitluck S."/>
            <person name="Chertkov O."/>
            <person name="Brettin T."/>
            <person name="Detter J.C."/>
            <person name="Han C."/>
            <person name="Kuske C.R."/>
            <person name="Schmutz J."/>
            <person name="Larimer F."/>
            <person name="Land M."/>
            <person name="Hauser L."/>
            <person name="Kyrpides N."/>
            <person name="Mikhailova N."/>
            <person name="Marx C."/>
            <person name="Richardson P."/>
        </authorList>
    </citation>
    <scope>NUCLEOTIDE SEQUENCE [LARGE SCALE GENOMIC DNA]</scope>
    <source>
        <strain>ATCC BAA-705 / NCIMB 13946 / BJ001</strain>
    </source>
</reference>
<evidence type="ECO:0000255" key="1">
    <source>
        <dbReference type="HAMAP-Rule" id="MF_00144"/>
    </source>
</evidence>
<evidence type="ECO:0000305" key="2"/>
<accession>B1ZGZ6</accession>
<gene>
    <name evidence="1" type="primary">mnmA</name>
    <name type="ordered locus">Mpop_4577</name>
</gene>
<dbReference type="EC" id="2.8.1.13" evidence="1"/>
<dbReference type="EMBL" id="CP001029">
    <property type="protein sequence ID" value="ACB82674.1"/>
    <property type="status" value="ALT_INIT"/>
    <property type="molecule type" value="Genomic_DNA"/>
</dbReference>
<dbReference type="RefSeq" id="WP_041372151.1">
    <property type="nucleotide sequence ID" value="NC_010725.1"/>
</dbReference>
<dbReference type="SMR" id="B1ZGZ6"/>
<dbReference type="STRING" id="441620.Mpop_4577"/>
<dbReference type="KEGG" id="mpo:Mpop_4577"/>
<dbReference type="eggNOG" id="COG0482">
    <property type="taxonomic scope" value="Bacteria"/>
</dbReference>
<dbReference type="HOGENOM" id="CLU_035188_0_1_5"/>
<dbReference type="OrthoDB" id="9800696at2"/>
<dbReference type="Proteomes" id="UP000007136">
    <property type="component" value="Chromosome"/>
</dbReference>
<dbReference type="GO" id="GO:0005737">
    <property type="term" value="C:cytoplasm"/>
    <property type="evidence" value="ECO:0007669"/>
    <property type="project" value="UniProtKB-SubCell"/>
</dbReference>
<dbReference type="GO" id="GO:0005524">
    <property type="term" value="F:ATP binding"/>
    <property type="evidence" value="ECO:0007669"/>
    <property type="project" value="UniProtKB-KW"/>
</dbReference>
<dbReference type="GO" id="GO:0000049">
    <property type="term" value="F:tRNA binding"/>
    <property type="evidence" value="ECO:0007669"/>
    <property type="project" value="UniProtKB-KW"/>
</dbReference>
<dbReference type="GO" id="GO:0103016">
    <property type="term" value="F:tRNA-uridine 2-sulfurtransferase activity"/>
    <property type="evidence" value="ECO:0007669"/>
    <property type="project" value="UniProtKB-EC"/>
</dbReference>
<dbReference type="GO" id="GO:0002143">
    <property type="term" value="P:tRNA wobble position uridine thiolation"/>
    <property type="evidence" value="ECO:0007669"/>
    <property type="project" value="TreeGrafter"/>
</dbReference>
<dbReference type="CDD" id="cd01998">
    <property type="entry name" value="MnmA_TRMU-like"/>
    <property type="match status" value="1"/>
</dbReference>
<dbReference type="FunFam" id="2.30.30.280:FF:000001">
    <property type="entry name" value="tRNA-specific 2-thiouridylase MnmA"/>
    <property type="match status" value="1"/>
</dbReference>
<dbReference type="FunFam" id="3.40.50.620:FF:000115">
    <property type="entry name" value="tRNA-specific 2-thiouridylase MnmA"/>
    <property type="match status" value="1"/>
</dbReference>
<dbReference type="Gene3D" id="2.30.30.280">
    <property type="entry name" value="Adenine nucleotide alpha hydrolases-like domains"/>
    <property type="match status" value="1"/>
</dbReference>
<dbReference type="Gene3D" id="3.40.50.620">
    <property type="entry name" value="HUPs"/>
    <property type="match status" value="1"/>
</dbReference>
<dbReference type="Gene3D" id="2.40.30.10">
    <property type="entry name" value="Translation factors"/>
    <property type="match status" value="1"/>
</dbReference>
<dbReference type="HAMAP" id="MF_00144">
    <property type="entry name" value="tRNA_thiouridyl_MnmA"/>
    <property type="match status" value="1"/>
</dbReference>
<dbReference type="InterPro" id="IPR004506">
    <property type="entry name" value="MnmA-like"/>
</dbReference>
<dbReference type="InterPro" id="IPR046885">
    <property type="entry name" value="MnmA-like_C"/>
</dbReference>
<dbReference type="InterPro" id="IPR046884">
    <property type="entry name" value="MnmA-like_central"/>
</dbReference>
<dbReference type="InterPro" id="IPR023382">
    <property type="entry name" value="MnmA-like_central_sf"/>
</dbReference>
<dbReference type="InterPro" id="IPR014729">
    <property type="entry name" value="Rossmann-like_a/b/a_fold"/>
</dbReference>
<dbReference type="NCBIfam" id="NF001138">
    <property type="entry name" value="PRK00143.1"/>
    <property type="match status" value="1"/>
</dbReference>
<dbReference type="NCBIfam" id="TIGR00420">
    <property type="entry name" value="trmU"/>
    <property type="match status" value="1"/>
</dbReference>
<dbReference type="PANTHER" id="PTHR11933:SF5">
    <property type="entry name" value="MITOCHONDRIAL TRNA-SPECIFIC 2-THIOURIDYLASE 1"/>
    <property type="match status" value="1"/>
</dbReference>
<dbReference type="PANTHER" id="PTHR11933">
    <property type="entry name" value="TRNA 5-METHYLAMINOMETHYL-2-THIOURIDYLATE -METHYLTRANSFERASE"/>
    <property type="match status" value="1"/>
</dbReference>
<dbReference type="Pfam" id="PF03054">
    <property type="entry name" value="tRNA_Me_trans"/>
    <property type="match status" value="1"/>
</dbReference>
<dbReference type="Pfam" id="PF20258">
    <property type="entry name" value="tRNA_Me_trans_C"/>
    <property type="match status" value="1"/>
</dbReference>
<dbReference type="Pfam" id="PF20259">
    <property type="entry name" value="tRNA_Me_trans_M"/>
    <property type="match status" value="1"/>
</dbReference>
<dbReference type="SUPFAM" id="SSF52402">
    <property type="entry name" value="Adenine nucleotide alpha hydrolases-like"/>
    <property type="match status" value="1"/>
</dbReference>
<comment type="function">
    <text evidence="1">Catalyzes the 2-thiolation of uridine at the wobble position (U34) of tRNA, leading to the formation of s(2)U34.</text>
</comment>
<comment type="catalytic activity">
    <reaction evidence="1">
        <text>S-sulfanyl-L-cysteinyl-[protein] + uridine(34) in tRNA + AH2 + ATP = 2-thiouridine(34) in tRNA + L-cysteinyl-[protein] + A + AMP + diphosphate + H(+)</text>
        <dbReference type="Rhea" id="RHEA:47032"/>
        <dbReference type="Rhea" id="RHEA-COMP:10131"/>
        <dbReference type="Rhea" id="RHEA-COMP:11726"/>
        <dbReference type="Rhea" id="RHEA-COMP:11727"/>
        <dbReference type="Rhea" id="RHEA-COMP:11728"/>
        <dbReference type="ChEBI" id="CHEBI:13193"/>
        <dbReference type="ChEBI" id="CHEBI:15378"/>
        <dbReference type="ChEBI" id="CHEBI:17499"/>
        <dbReference type="ChEBI" id="CHEBI:29950"/>
        <dbReference type="ChEBI" id="CHEBI:30616"/>
        <dbReference type="ChEBI" id="CHEBI:33019"/>
        <dbReference type="ChEBI" id="CHEBI:61963"/>
        <dbReference type="ChEBI" id="CHEBI:65315"/>
        <dbReference type="ChEBI" id="CHEBI:87170"/>
        <dbReference type="ChEBI" id="CHEBI:456215"/>
        <dbReference type="EC" id="2.8.1.13"/>
    </reaction>
</comment>
<comment type="subcellular location">
    <subcellularLocation>
        <location evidence="1">Cytoplasm</location>
    </subcellularLocation>
</comment>
<comment type="similarity">
    <text evidence="1">Belongs to the MnmA/TRMU family.</text>
</comment>
<comment type="sequence caution" evidence="2">
    <conflict type="erroneous initiation">
        <sequence resource="EMBL-CDS" id="ACB82674"/>
    </conflict>
</comment>
<feature type="chain" id="PRO_0000349697" description="tRNA-specific 2-thiouridylase MnmA">
    <location>
        <begin position="1"/>
        <end position="385"/>
    </location>
</feature>
<feature type="region of interest" description="Interaction with tRNA" evidence="1">
    <location>
        <begin position="159"/>
        <end position="161"/>
    </location>
</feature>
<feature type="active site" description="Nucleophile" evidence="1">
    <location>
        <position position="112"/>
    </location>
</feature>
<feature type="active site" description="Cysteine persulfide intermediate" evidence="1">
    <location>
        <position position="209"/>
    </location>
</feature>
<feature type="binding site" evidence="1">
    <location>
        <begin position="18"/>
        <end position="25"/>
    </location>
    <ligand>
        <name>ATP</name>
        <dbReference type="ChEBI" id="CHEBI:30616"/>
    </ligand>
</feature>
<feature type="binding site" evidence="1">
    <location>
        <position position="44"/>
    </location>
    <ligand>
        <name>ATP</name>
        <dbReference type="ChEBI" id="CHEBI:30616"/>
    </ligand>
</feature>
<feature type="binding site" evidence="1">
    <location>
        <position position="136"/>
    </location>
    <ligand>
        <name>ATP</name>
        <dbReference type="ChEBI" id="CHEBI:30616"/>
    </ligand>
</feature>
<feature type="site" description="Interaction with tRNA" evidence="1">
    <location>
        <position position="137"/>
    </location>
</feature>
<feature type="site" description="Interaction with tRNA" evidence="1">
    <location>
        <position position="351"/>
    </location>
</feature>
<feature type="disulfide bond" description="Alternate" evidence="1">
    <location>
        <begin position="112"/>
        <end position="209"/>
    </location>
</feature>